<accession>Q8YIJ3</accession>
<feature type="chain" id="PRO_0000140428" description="2-isopropylmalate synthase">
    <location>
        <begin position="1"/>
        <end position="555"/>
    </location>
</feature>
<feature type="domain" description="Pyruvate carboxyltransferase" evidence="1">
    <location>
        <begin position="30"/>
        <end position="303"/>
    </location>
</feature>
<feature type="region of interest" description="Regulatory domain" evidence="1">
    <location>
        <begin position="437"/>
        <end position="555"/>
    </location>
</feature>
<feature type="binding site" evidence="1">
    <location>
        <position position="39"/>
    </location>
    <ligand>
        <name>Mg(2+)</name>
        <dbReference type="ChEBI" id="CHEBI:18420"/>
    </ligand>
</feature>
<feature type="binding site" evidence="1">
    <location>
        <position position="242"/>
    </location>
    <ligand>
        <name>Mg(2+)</name>
        <dbReference type="ChEBI" id="CHEBI:18420"/>
    </ligand>
</feature>
<feature type="binding site" evidence="1">
    <location>
        <position position="244"/>
    </location>
    <ligand>
        <name>Mg(2+)</name>
        <dbReference type="ChEBI" id="CHEBI:18420"/>
    </ligand>
</feature>
<feature type="binding site" evidence="1">
    <location>
        <position position="278"/>
    </location>
    <ligand>
        <name>Mg(2+)</name>
        <dbReference type="ChEBI" id="CHEBI:18420"/>
    </ligand>
</feature>
<reference key="1">
    <citation type="journal article" date="2002" name="Proc. Natl. Acad. Sci. U.S.A.">
        <title>The genome sequence of the facultative intracellular pathogen Brucella melitensis.</title>
        <authorList>
            <person name="DelVecchio V.G."/>
            <person name="Kapatral V."/>
            <person name="Redkar R.J."/>
            <person name="Patra G."/>
            <person name="Mujer C."/>
            <person name="Los T."/>
            <person name="Ivanova N."/>
            <person name="Anderson I."/>
            <person name="Bhattacharyya A."/>
            <person name="Lykidis A."/>
            <person name="Reznik G."/>
            <person name="Jablonski L."/>
            <person name="Larsen N."/>
            <person name="D'Souza M."/>
            <person name="Bernal A."/>
            <person name="Mazur M."/>
            <person name="Goltsman E."/>
            <person name="Selkov E."/>
            <person name="Elzer P.H."/>
            <person name="Hagius S."/>
            <person name="O'Callaghan D."/>
            <person name="Letesson J.-J."/>
            <person name="Haselkorn R."/>
            <person name="Kyrpides N.C."/>
            <person name="Overbeek R."/>
        </authorList>
    </citation>
    <scope>NUCLEOTIDE SEQUENCE [LARGE SCALE GENOMIC DNA]</scope>
    <source>
        <strain>ATCC 23456 / CCUG 17765 / NCTC 10094 / 16M</strain>
    </source>
</reference>
<name>LEU1_BRUME</name>
<evidence type="ECO:0000255" key="1">
    <source>
        <dbReference type="HAMAP-Rule" id="MF_00572"/>
    </source>
</evidence>
<evidence type="ECO:0000305" key="2"/>
<sequence>MPIAGTKYAPFPAPQLDDRTWPSKRIEKAPIWCSVDLRDGNQALIDPMGHDRKERMFRLLIDMGFPEIEIGFPSASQTDFDFCRWAIEQGDVPDDVDLQVLVQCRPELITRTFEALEGAKTPIIHFYNSTSELQRRVVFAKDVGGIKQIATDAAKMIMDMAAKAGGGYRFQYSPESFTGTELDVALEICNAVIEIVKPTPDNKLIVNLPSTVEMNTPNVYADQIEWMCRNLDNRESLIISLHPHNDRGTGIAATELGLMAGADRGEGTLFGNGERTGNVDVVTLALNMYTQGIDPGLDCTDINRMKEVYEYSNQLKIAERHPYVGELVYTAFSGSHQDAINKGMKARRSANSPVWEVPYLPIDPQDVGRSYEAIIRINSQSGKGGIAYILQADYGLNLPRNLQVEFREIIQHITDEEGKELPSKRIYEEFQKLYVTQPDARIKFVDHHTYPHPEQKGRRILTAEITDNGVTKTIEGKGTGPIDGFVDALSKYLGVKMSVVDYSEHSLQQGSDASAISYVEMVYPGGKLFGVGINDNIVSASLEAVVSAANRVIAK</sequence>
<dbReference type="EC" id="2.3.3.13" evidence="1"/>
<dbReference type="EMBL" id="AE008917">
    <property type="protein sequence ID" value="AAL51632.1"/>
    <property type="status" value="ALT_INIT"/>
    <property type="molecule type" value="Genomic_DNA"/>
</dbReference>
<dbReference type="PIR" id="AE3308">
    <property type="entry name" value="AE3308"/>
</dbReference>
<dbReference type="SMR" id="Q8YIJ3"/>
<dbReference type="KEGG" id="bme:BMEI0451"/>
<dbReference type="KEGG" id="bmel:DK63_972"/>
<dbReference type="PATRIC" id="fig|224914.52.peg.1026"/>
<dbReference type="eggNOG" id="COG0119">
    <property type="taxonomic scope" value="Bacteria"/>
</dbReference>
<dbReference type="UniPathway" id="UPA00048">
    <property type="reaction ID" value="UER00070"/>
</dbReference>
<dbReference type="PRO" id="PR:Q8YIJ3"/>
<dbReference type="Proteomes" id="UP000000419">
    <property type="component" value="Chromosome I"/>
</dbReference>
<dbReference type="GO" id="GO:0005737">
    <property type="term" value="C:cytoplasm"/>
    <property type="evidence" value="ECO:0007669"/>
    <property type="project" value="UniProtKB-SubCell"/>
</dbReference>
<dbReference type="GO" id="GO:0003852">
    <property type="term" value="F:2-isopropylmalate synthase activity"/>
    <property type="evidence" value="ECO:0007669"/>
    <property type="project" value="UniProtKB-UniRule"/>
</dbReference>
<dbReference type="GO" id="GO:0003985">
    <property type="term" value="F:acetyl-CoA C-acetyltransferase activity"/>
    <property type="evidence" value="ECO:0007669"/>
    <property type="project" value="UniProtKB-UniRule"/>
</dbReference>
<dbReference type="GO" id="GO:0000287">
    <property type="term" value="F:magnesium ion binding"/>
    <property type="evidence" value="ECO:0007669"/>
    <property type="project" value="UniProtKB-UniRule"/>
</dbReference>
<dbReference type="GO" id="GO:0009098">
    <property type="term" value="P:L-leucine biosynthetic process"/>
    <property type="evidence" value="ECO:0007669"/>
    <property type="project" value="UniProtKB-UniRule"/>
</dbReference>
<dbReference type="CDD" id="cd07942">
    <property type="entry name" value="DRE_TIM_LeuA"/>
    <property type="match status" value="1"/>
</dbReference>
<dbReference type="Gene3D" id="3.30.160.270">
    <property type="match status" value="1"/>
</dbReference>
<dbReference type="Gene3D" id="3.20.20.70">
    <property type="entry name" value="Aldolase class I"/>
    <property type="match status" value="1"/>
</dbReference>
<dbReference type="HAMAP" id="MF_00572">
    <property type="entry name" value="LeuA_type2"/>
    <property type="match status" value="1"/>
</dbReference>
<dbReference type="InterPro" id="IPR013709">
    <property type="entry name" value="2-isopropylmalate_synth_dimer"/>
</dbReference>
<dbReference type="InterPro" id="IPR002034">
    <property type="entry name" value="AIPM/Hcit_synth_CS"/>
</dbReference>
<dbReference type="InterPro" id="IPR013785">
    <property type="entry name" value="Aldolase_TIM"/>
</dbReference>
<dbReference type="InterPro" id="IPR005668">
    <property type="entry name" value="IPM_Synthase"/>
</dbReference>
<dbReference type="InterPro" id="IPR054692">
    <property type="entry name" value="LeuA-like_post-cat"/>
</dbReference>
<dbReference type="InterPro" id="IPR036230">
    <property type="entry name" value="LeuA_allosteric_dom_sf"/>
</dbReference>
<dbReference type="InterPro" id="IPR039371">
    <property type="entry name" value="LeuA_N_DRE-TIM"/>
</dbReference>
<dbReference type="InterPro" id="IPR000891">
    <property type="entry name" value="PYR_CT"/>
</dbReference>
<dbReference type="NCBIfam" id="TIGR00970">
    <property type="entry name" value="leuA_yeast"/>
    <property type="match status" value="1"/>
</dbReference>
<dbReference type="NCBIfam" id="NF002991">
    <property type="entry name" value="PRK03739.1"/>
    <property type="match status" value="1"/>
</dbReference>
<dbReference type="PANTHER" id="PTHR46911">
    <property type="match status" value="1"/>
</dbReference>
<dbReference type="PANTHER" id="PTHR46911:SF1">
    <property type="entry name" value="2-ISOPROPYLMALATE SYNTHASE"/>
    <property type="match status" value="1"/>
</dbReference>
<dbReference type="Pfam" id="PF00682">
    <property type="entry name" value="HMGL-like"/>
    <property type="match status" value="1"/>
</dbReference>
<dbReference type="Pfam" id="PF22615">
    <property type="entry name" value="IPMS_D2"/>
    <property type="match status" value="1"/>
</dbReference>
<dbReference type="Pfam" id="PF08502">
    <property type="entry name" value="LeuA_dimer"/>
    <property type="match status" value="1"/>
</dbReference>
<dbReference type="SMART" id="SM00917">
    <property type="entry name" value="LeuA_dimer"/>
    <property type="match status" value="1"/>
</dbReference>
<dbReference type="SUPFAM" id="SSF110921">
    <property type="entry name" value="2-isopropylmalate synthase LeuA, allosteric (dimerisation) domain"/>
    <property type="match status" value="1"/>
</dbReference>
<dbReference type="SUPFAM" id="SSF51569">
    <property type="entry name" value="Aldolase"/>
    <property type="match status" value="1"/>
</dbReference>
<dbReference type="SUPFAM" id="SSF89000">
    <property type="entry name" value="post-HMGL domain-like"/>
    <property type="match status" value="1"/>
</dbReference>
<dbReference type="PROSITE" id="PS00815">
    <property type="entry name" value="AIPM_HOMOCIT_SYNTH_1"/>
    <property type="match status" value="1"/>
</dbReference>
<dbReference type="PROSITE" id="PS00816">
    <property type="entry name" value="AIPM_HOMOCIT_SYNTH_2"/>
    <property type="match status" value="1"/>
</dbReference>
<dbReference type="PROSITE" id="PS50991">
    <property type="entry name" value="PYR_CT"/>
    <property type="match status" value="1"/>
</dbReference>
<proteinExistence type="inferred from homology"/>
<organism>
    <name type="scientific">Brucella melitensis biotype 1 (strain ATCC 23456 / CCUG 17765 / NCTC 10094 / 16M)</name>
    <dbReference type="NCBI Taxonomy" id="224914"/>
    <lineage>
        <taxon>Bacteria</taxon>
        <taxon>Pseudomonadati</taxon>
        <taxon>Pseudomonadota</taxon>
        <taxon>Alphaproteobacteria</taxon>
        <taxon>Hyphomicrobiales</taxon>
        <taxon>Brucellaceae</taxon>
        <taxon>Brucella/Ochrobactrum group</taxon>
        <taxon>Brucella</taxon>
    </lineage>
</organism>
<keyword id="KW-0028">Amino-acid biosynthesis</keyword>
<keyword id="KW-0100">Branched-chain amino acid biosynthesis</keyword>
<keyword id="KW-0963">Cytoplasm</keyword>
<keyword id="KW-0432">Leucine biosynthesis</keyword>
<keyword id="KW-0460">Magnesium</keyword>
<keyword id="KW-0479">Metal-binding</keyword>
<keyword id="KW-0808">Transferase</keyword>
<gene>
    <name evidence="1" type="primary">leuA</name>
    <name type="ordered locus">BMEI0451</name>
</gene>
<protein>
    <recommendedName>
        <fullName evidence="1">2-isopropylmalate synthase</fullName>
        <ecNumber evidence="1">2.3.3.13</ecNumber>
    </recommendedName>
    <alternativeName>
        <fullName evidence="1">Alpha-IPM synthase</fullName>
    </alternativeName>
    <alternativeName>
        <fullName evidence="1">Alpha-isopropylmalate synthase</fullName>
    </alternativeName>
</protein>
<comment type="function">
    <text evidence="1">Catalyzes the condensation of the acetyl group of acetyl-CoA with 3-methyl-2-oxobutanoate (2-ketoisovalerate) to form 3-carboxy-3-hydroxy-4-methylpentanoate (2-isopropylmalate).</text>
</comment>
<comment type="catalytic activity">
    <reaction evidence="1">
        <text>3-methyl-2-oxobutanoate + acetyl-CoA + H2O = (2S)-2-isopropylmalate + CoA + H(+)</text>
        <dbReference type="Rhea" id="RHEA:21524"/>
        <dbReference type="ChEBI" id="CHEBI:1178"/>
        <dbReference type="ChEBI" id="CHEBI:11851"/>
        <dbReference type="ChEBI" id="CHEBI:15377"/>
        <dbReference type="ChEBI" id="CHEBI:15378"/>
        <dbReference type="ChEBI" id="CHEBI:57287"/>
        <dbReference type="ChEBI" id="CHEBI:57288"/>
        <dbReference type="EC" id="2.3.3.13"/>
    </reaction>
</comment>
<comment type="cofactor">
    <cofactor evidence="1">
        <name>Mg(2+)</name>
        <dbReference type="ChEBI" id="CHEBI:18420"/>
    </cofactor>
</comment>
<comment type="pathway">
    <text evidence="1">Amino-acid biosynthesis; L-leucine biosynthesis; L-leucine from 3-methyl-2-oxobutanoate: step 1/4.</text>
</comment>
<comment type="subunit">
    <text evidence="1">Homodimer.</text>
</comment>
<comment type="subcellular location">
    <subcellularLocation>
        <location evidence="1">Cytoplasm</location>
    </subcellularLocation>
</comment>
<comment type="similarity">
    <text evidence="1">Belongs to the alpha-IPM synthase/homocitrate synthase family. LeuA type 2 subfamily.</text>
</comment>
<comment type="sequence caution" evidence="2">
    <conflict type="erroneous initiation">
        <sequence resource="EMBL-CDS" id="AAL51632"/>
    </conflict>
    <text>Extended N-terminus.</text>
</comment>